<feature type="chain" id="PRO_0000104565" description="Serpentine receptor class gamma-16">
    <location>
        <begin position="1"/>
        <end position="325"/>
    </location>
</feature>
<feature type="transmembrane region" description="Helical" evidence="1">
    <location>
        <begin position="25"/>
        <end position="45"/>
    </location>
</feature>
<feature type="transmembrane region" description="Helical" evidence="1">
    <location>
        <begin position="65"/>
        <end position="85"/>
    </location>
</feature>
<feature type="transmembrane region" description="Helical" evidence="1">
    <location>
        <begin position="87"/>
        <end position="107"/>
    </location>
</feature>
<feature type="transmembrane region" description="Helical" evidence="1">
    <location>
        <begin position="144"/>
        <end position="164"/>
    </location>
</feature>
<feature type="transmembrane region" description="Helical" evidence="1">
    <location>
        <begin position="187"/>
        <end position="207"/>
    </location>
</feature>
<feature type="transmembrane region" description="Helical" evidence="1">
    <location>
        <begin position="232"/>
        <end position="252"/>
    </location>
</feature>
<feature type="transmembrane region" description="Helical" evidence="1">
    <location>
        <begin position="264"/>
        <end position="284"/>
    </location>
</feature>
<comment type="subcellular location">
    <subcellularLocation>
        <location evidence="2">Membrane</location>
        <topology evidence="2">Multi-pass membrane protein</topology>
    </subcellularLocation>
</comment>
<comment type="similarity">
    <text evidence="2">Belongs to the nematode receptor-like protein srg family.</text>
</comment>
<name>SRG16_CAEEL</name>
<protein>
    <recommendedName>
        <fullName>Serpentine receptor class gamma-16</fullName>
        <shortName>Protein srg-16</shortName>
    </recommendedName>
</protein>
<keyword id="KW-0472">Membrane</keyword>
<keyword id="KW-1185">Reference proteome</keyword>
<keyword id="KW-0812">Transmembrane</keyword>
<keyword id="KW-1133">Transmembrane helix</keyword>
<dbReference type="EMBL" id="Z81062">
    <property type="protein sequence ID" value="CAB02948.2"/>
    <property type="molecule type" value="Genomic_DNA"/>
</dbReference>
<dbReference type="PIR" id="T20954">
    <property type="entry name" value="T20954"/>
</dbReference>
<dbReference type="RefSeq" id="NP_496656.2">
    <property type="nucleotide sequence ID" value="NM_064255.2"/>
</dbReference>
<dbReference type="SMR" id="O17819"/>
<dbReference type="PaxDb" id="6239-F15A4.4"/>
<dbReference type="EnsemblMetazoa" id="F15A4.4.1">
    <property type="protein sequence ID" value="F15A4.4.1"/>
    <property type="gene ID" value="WBGene00005173"/>
</dbReference>
<dbReference type="GeneID" id="184513"/>
<dbReference type="KEGG" id="cel:CELE_F15A4.4"/>
<dbReference type="UCSC" id="F15A4.4">
    <property type="organism name" value="c. elegans"/>
</dbReference>
<dbReference type="AGR" id="WB:WBGene00005173"/>
<dbReference type="CTD" id="184513"/>
<dbReference type="WormBase" id="F15A4.4">
    <property type="protein sequence ID" value="CE33050"/>
    <property type="gene ID" value="WBGene00005173"/>
    <property type="gene designation" value="srg-16"/>
</dbReference>
<dbReference type="eggNOG" id="ENOG502TFP8">
    <property type="taxonomic scope" value="Eukaryota"/>
</dbReference>
<dbReference type="GeneTree" id="ENSGT00970000195841"/>
<dbReference type="HOGENOM" id="CLU_061253_1_0_1"/>
<dbReference type="InParanoid" id="O17819"/>
<dbReference type="OMA" id="IRINCSK"/>
<dbReference type="OrthoDB" id="5871702at2759"/>
<dbReference type="PhylomeDB" id="O17819"/>
<dbReference type="PRO" id="PR:O17819"/>
<dbReference type="Proteomes" id="UP000001940">
    <property type="component" value="Chromosome II"/>
</dbReference>
<dbReference type="GO" id="GO:0016020">
    <property type="term" value="C:membrane"/>
    <property type="evidence" value="ECO:0007669"/>
    <property type="project" value="UniProtKB-SubCell"/>
</dbReference>
<dbReference type="GO" id="GO:0004888">
    <property type="term" value="F:transmembrane signaling receptor activity"/>
    <property type="evidence" value="ECO:0007669"/>
    <property type="project" value="InterPro"/>
</dbReference>
<dbReference type="GO" id="GO:0007606">
    <property type="term" value="P:sensory perception of chemical stimulus"/>
    <property type="evidence" value="ECO:0007669"/>
    <property type="project" value="InterPro"/>
</dbReference>
<dbReference type="InterPro" id="IPR000609">
    <property type="entry name" value="7TM_GPCR_serpentine_rcpt_Srg"/>
</dbReference>
<dbReference type="InterPro" id="IPR051119">
    <property type="entry name" value="Nematode_SR-like"/>
</dbReference>
<dbReference type="PANTHER" id="PTHR31627:SF10">
    <property type="entry name" value="SERPENTINE RECEPTOR CLASS GAMMA-16"/>
    <property type="match status" value="1"/>
</dbReference>
<dbReference type="PANTHER" id="PTHR31627">
    <property type="entry name" value="SERPENTINE RECEPTOR CLASS GAMMA-RELATED"/>
    <property type="match status" value="1"/>
</dbReference>
<dbReference type="Pfam" id="PF02118">
    <property type="entry name" value="Srg"/>
    <property type="match status" value="1"/>
</dbReference>
<dbReference type="PRINTS" id="PR00698">
    <property type="entry name" value="TMPROTEINSRG"/>
</dbReference>
<reference key="1">
    <citation type="journal article" date="1998" name="Science">
        <title>Genome sequence of the nematode C. elegans: a platform for investigating biology.</title>
        <authorList>
            <consortium name="The C. elegans sequencing consortium"/>
        </authorList>
    </citation>
    <scope>NUCLEOTIDE SEQUENCE [LARGE SCALE GENOMIC DNA]</scope>
    <source>
        <strain>Bristol N2</strain>
    </source>
</reference>
<evidence type="ECO:0000255" key="1"/>
<evidence type="ECO:0000305" key="2"/>
<gene>
    <name type="primary">srg-16</name>
    <name type="ORF">F15A4.4</name>
</gene>
<organism>
    <name type="scientific">Caenorhabditis elegans</name>
    <dbReference type="NCBI Taxonomy" id="6239"/>
    <lineage>
        <taxon>Eukaryota</taxon>
        <taxon>Metazoa</taxon>
        <taxon>Ecdysozoa</taxon>
        <taxon>Nematoda</taxon>
        <taxon>Chromadorea</taxon>
        <taxon>Rhabditida</taxon>
        <taxon>Rhabditina</taxon>
        <taxon>Rhabditomorpha</taxon>
        <taxon>Rhabditoidea</taxon>
        <taxon>Rhabditidae</taxon>
        <taxon>Peloderinae</taxon>
        <taxon>Caenorhabditis</taxon>
    </lineage>
</organism>
<proteinExistence type="inferred from homology"/>
<sequence>MNTSIRINCSKSYDDFVEASKFVGFCLYLIPGAILHVLILRILLIKQRKVFRNNSFFRIFATDSVVSLVLIFWGIFFNRLFMFIPPLCPLVSPLFFEPSLFLKMYYWMYNHARMSKSVAQILMVLNRMCCVISPIGYEKIWNKLAVTTVFVVLALPFFGSWNLLLSRMYIFPSYGGFNASYVKYVQWASLSMFQSIFLLIALCFTIICSSVSLYKLIILPDRIKSAEKSLCFVSLFYSIAFLVVAVSQLIFVFCEVCLKNRLYLLFQFFAFDFLTVGSAVIIMLSSPQLSNFLGFSGTFYRRKASPPGSTVVKIFTSVHNNSSII</sequence>
<accession>O17819</accession>